<dbReference type="EMBL" id="X84727">
    <property type="protein sequence ID" value="CAA59216.1"/>
    <property type="molecule type" value="mRNA"/>
</dbReference>
<dbReference type="EMBL" id="BC065118">
    <property type="protein sequence ID" value="AAH65118.1"/>
    <property type="molecule type" value="mRNA"/>
</dbReference>
<dbReference type="EMBL" id="AK082298">
    <property type="protein sequence ID" value="BAC38458.1"/>
    <property type="molecule type" value="mRNA"/>
</dbReference>
<dbReference type="CCDS" id="CCDS22358.1"/>
<dbReference type="PIR" id="S52781">
    <property type="entry name" value="S52781"/>
</dbReference>
<dbReference type="RefSeq" id="NP_031815.2">
    <property type="nucleotide sequence ID" value="NM_007789.3"/>
</dbReference>
<dbReference type="SMR" id="P55066"/>
<dbReference type="BioGRID" id="198950">
    <property type="interactions" value="10"/>
</dbReference>
<dbReference type="FunCoup" id="P55066">
    <property type="interactions" value="163"/>
</dbReference>
<dbReference type="IntAct" id="P55066">
    <property type="interactions" value="7"/>
</dbReference>
<dbReference type="MINT" id="P55066"/>
<dbReference type="STRING" id="10090.ENSMUSP00000002412"/>
<dbReference type="GlyConnect" id="2545">
    <property type="glycosylation" value="29 N-Linked glycans (4 sites)"/>
</dbReference>
<dbReference type="GlyCosmos" id="P55066">
    <property type="glycosylation" value="5 sites, 13 glycans"/>
</dbReference>
<dbReference type="GlyGen" id="P55066">
    <property type="glycosylation" value="10 sites, 12 N-linked glycans (2 sites), 1 O-linked glycan (1 site)"/>
</dbReference>
<dbReference type="iPTMnet" id="P55066"/>
<dbReference type="PhosphoSitePlus" id="P55066"/>
<dbReference type="SwissPalm" id="P55066"/>
<dbReference type="CPTAC" id="non-CPTAC-3484"/>
<dbReference type="jPOST" id="P55066"/>
<dbReference type="PaxDb" id="10090-ENSMUSP00000002412"/>
<dbReference type="PeptideAtlas" id="P55066"/>
<dbReference type="ProteomicsDB" id="287451"/>
<dbReference type="GeneID" id="13004"/>
<dbReference type="KEGG" id="mmu:13004"/>
<dbReference type="UCSC" id="uc009lys.2">
    <property type="organism name" value="mouse"/>
</dbReference>
<dbReference type="AGR" id="MGI:104694"/>
<dbReference type="CTD" id="1463"/>
<dbReference type="MGI" id="MGI:104694">
    <property type="gene designation" value="Ncan"/>
</dbReference>
<dbReference type="eggNOG" id="ENOG502QQ78">
    <property type="taxonomic scope" value="Eukaryota"/>
</dbReference>
<dbReference type="InParanoid" id="P55066"/>
<dbReference type="OrthoDB" id="441660at2759"/>
<dbReference type="PhylomeDB" id="P55066"/>
<dbReference type="TreeFam" id="TF332134"/>
<dbReference type="Reactome" id="R-MMU-1971475">
    <property type="pathway name" value="A tetrasaccharide linker sequence is required for GAG synthesis"/>
</dbReference>
<dbReference type="Reactome" id="R-MMU-2022870">
    <property type="pathway name" value="Chondroitin sulfate biosynthesis"/>
</dbReference>
<dbReference type="Reactome" id="R-MMU-2022923">
    <property type="pathway name" value="Dermatan sulfate biosynthesis"/>
</dbReference>
<dbReference type="Reactome" id="R-MMU-2024101">
    <property type="pathway name" value="CS/DS degradation"/>
</dbReference>
<dbReference type="Reactome" id="R-MMU-3000178">
    <property type="pathway name" value="ECM proteoglycans"/>
</dbReference>
<dbReference type="BioGRID-ORCS" id="13004">
    <property type="hits" value="4 hits in 77 CRISPR screens"/>
</dbReference>
<dbReference type="CD-CODE" id="CE726F99">
    <property type="entry name" value="Postsynaptic density"/>
</dbReference>
<dbReference type="ChiTaRS" id="Ncan">
    <property type="organism name" value="mouse"/>
</dbReference>
<dbReference type="PRO" id="PR:P55066"/>
<dbReference type="Proteomes" id="UP000000589">
    <property type="component" value="Unplaced"/>
</dbReference>
<dbReference type="RNAct" id="P55066">
    <property type="molecule type" value="protein"/>
</dbReference>
<dbReference type="GO" id="GO:0005576">
    <property type="term" value="C:extracellular region"/>
    <property type="evidence" value="ECO:0007669"/>
    <property type="project" value="UniProtKB-SubCell"/>
</dbReference>
<dbReference type="GO" id="GO:0098982">
    <property type="term" value="C:GABA-ergic synapse"/>
    <property type="evidence" value="ECO:0000314"/>
    <property type="project" value="SynGO"/>
</dbReference>
<dbReference type="GO" id="GO:0098978">
    <property type="term" value="C:glutamatergic synapse"/>
    <property type="evidence" value="ECO:0000314"/>
    <property type="project" value="SynGO"/>
</dbReference>
<dbReference type="GO" id="GO:0098966">
    <property type="term" value="C:perisynaptic extracellular matrix"/>
    <property type="evidence" value="ECO:0000314"/>
    <property type="project" value="SynGO"/>
</dbReference>
<dbReference type="GO" id="GO:0005886">
    <property type="term" value="C:plasma membrane"/>
    <property type="evidence" value="ECO:0000304"/>
    <property type="project" value="Reactome"/>
</dbReference>
<dbReference type="GO" id="GO:0005509">
    <property type="term" value="F:calcium ion binding"/>
    <property type="evidence" value="ECO:0007669"/>
    <property type="project" value="InterPro"/>
</dbReference>
<dbReference type="GO" id="GO:0030246">
    <property type="term" value="F:carbohydrate binding"/>
    <property type="evidence" value="ECO:0007669"/>
    <property type="project" value="UniProtKB-KW"/>
</dbReference>
<dbReference type="GO" id="GO:0005540">
    <property type="term" value="F:hyaluronic acid binding"/>
    <property type="evidence" value="ECO:0007669"/>
    <property type="project" value="UniProtKB-KW"/>
</dbReference>
<dbReference type="GO" id="GO:0007155">
    <property type="term" value="P:cell adhesion"/>
    <property type="evidence" value="ECO:0007669"/>
    <property type="project" value="UniProtKB-KW"/>
</dbReference>
<dbReference type="GO" id="GO:0050804">
    <property type="term" value="P:modulation of chemical synaptic transmission"/>
    <property type="evidence" value="ECO:0000314"/>
    <property type="project" value="SynGO"/>
</dbReference>
<dbReference type="GO" id="GO:0099175">
    <property type="term" value="P:regulation of postsynapse organization"/>
    <property type="evidence" value="ECO:0000314"/>
    <property type="project" value="SynGO"/>
</dbReference>
<dbReference type="GO" id="GO:0051823">
    <property type="term" value="P:regulation of synapse structural plasticity"/>
    <property type="evidence" value="ECO:0000315"/>
    <property type="project" value="MGI"/>
</dbReference>
<dbReference type="CDD" id="cd00033">
    <property type="entry name" value="CCP"/>
    <property type="match status" value="1"/>
</dbReference>
<dbReference type="CDD" id="cd00054">
    <property type="entry name" value="EGF_CA"/>
    <property type="match status" value="2"/>
</dbReference>
<dbReference type="CDD" id="cd03517">
    <property type="entry name" value="Link_domain_CSPGs_modules_1_3"/>
    <property type="match status" value="1"/>
</dbReference>
<dbReference type="CDD" id="cd03520">
    <property type="entry name" value="Link_domain_CSPGs_modules_2_4"/>
    <property type="match status" value="1"/>
</dbReference>
<dbReference type="FunFam" id="3.10.100.10:FF:000011">
    <property type="entry name" value="Aggrecan core protein"/>
    <property type="match status" value="1"/>
</dbReference>
<dbReference type="FunFam" id="2.10.25.10:FF:000012">
    <property type="entry name" value="Delta-like protein"/>
    <property type="match status" value="1"/>
</dbReference>
<dbReference type="FunFam" id="3.10.100.10:FF:000002">
    <property type="entry name" value="Hyaluronan proteoglycan link protein 1"/>
    <property type="match status" value="1"/>
</dbReference>
<dbReference type="FunFam" id="2.60.40.10:FF:000571">
    <property type="entry name" value="Neurocan core protein"/>
    <property type="match status" value="1"/>
</dbReference>
<dbReference type="FunFam" id="2.10.70.10:FF:000003">
    <property type="entry name" value="Versican core protein"/>
    <property type="match status" value="1"/>
</dbReference>
<dbReference type="FunFam" id="3.10.100.10:FF:000003">
    <property type="entry name" value="Versican core protein"/>
    <property type="match status" value="1"/>
</dbReference>
<dbReference type="FunFam" id="2.10.25.10:FF:000006">
    <property type="entry name" value="Versican core protein-like isoform 1"/>
    <property type="match status" value="1"/>
</dbReference>
<dbReference type="Gene3D" id="2.10.70.10">
    <property type="entry name" value="Complement Module, domain 1"/>
    <property type="match status" value="1"/>
</dbReference>
<dbReference type="Gene3D" id="2.60.40.10">
    <property type="entry name" value="Immunoglobulins"/>
    <property type="match status" value="1"/>
</dbReference>
<dbReference type="Gene3D" id="2.10.25.10">
    <property type="entry name" value="Laminin"/>
    <property type="match status" value="2"/>
</dbReference>
<dbReference type="Gene3D" id="3.10.100.10">
    <property type="entry name" value="Mannose-Binding Protein A, subunit A"/>
    <property type="match status" value="3"/>
</dbReference>
<dbReference type="InterPro" id="IPR001304">
    <property type="entry name" value="C-type_lectin-like"/>
</dbReference>
<dbReference type="InterPro" id="IPR016186">
    <property type="entry name" value="C-type_lectin-like/link_sf"/>
</dbReference>
<dbReference type="InterPro" id="IPR018378">
    <property type="entry name" value="C-type_lectin_CS"/>
</dbReference>
<dbReference type="InterPro" id="IPR016187">
    <property type="entry name" value="CTDL_fold"/>
</dbReference>
<dbReference type="InterPro" id="IPR001881">
    <property type="entry name" value="EGF-like_Ca-bd_dom"/>
</dbReference>
<dbReference type="InterPro" id="IPR000742">
    <property type="entry name" value="EGF-like_dom"/>
</dbReference>
<dbReference type="InterPro" id="IPR000152">
    <property type="entry name" value="EGF-type_Asp/Asn_hydroxyl_site"/>
</dbReference>
<dbReference type="InterPro" id="IPR018097">
    <property type="entry name" value="EGF_Ca-bd_CS"/>
</dbReference>
<dbReference type="InterPro" id="IPR050691">
    <property type="entry name" value="Hyaluronan_bind_Proteoglycan"/>
</dbReference>
<dbReference type="InterPro" id="IPR007110">
    <property type="entry name" value="Ig-like_dom"/>
</dbReference>
<dbReference type="InterPro" id="IPR036179">
    <property type="entry name" value="Ig-like_dom_sf"/>
</dbReference>
<dbReference type="InterPro" id="IPR013783">
    <property type="entry name" value="Ig-like_fold"/>
</dbReference>
<dbReference type="InterPro" id="IPR003599">
    <property type="entry name" value="Ig_sub"/>
</dbReference>
<dbReference type="InterPro" id="IPR013106">
    <property type="entry name" value="Ig_V-set"/>
</dbReference>
<dbReference type="InterPro" id="IPR000538">
    <property type="entry name" value="Link_dom"/>
</dbReference>
<dbReference type="InterPro" id="IPR035976">
    <property type="entry name" value="Sushi/SCR/CCP_sf"/>
</dbReference>
<dbReference type="InterPro" id="IPR000436">
    <property type="entry name" value="Sushi_SCR_CCP_dom"/>
</dbReference>
<dbReference type="PANTHER" id="PTHR22804">
    <property type="entry name" value="AGGRECAN/VERSICAN PROTEOGLYCAN"/>
    <property type="match status" value="1"/>
</dbReference>
<dbReference type="PANTHER" id="PTHR22804:SF24">
    <property type="entry name" value="NEUROCAN CORE PROTEIN"/>
    <property type="match status" value="1"/>
</dbReference>
<dbReference type="Pfam" id="PF00008">
    <property type="entry name" value="EGF"/>
    <property type="match status" value="1"/>
</dbReference>
<dbReference type="Pfam" id="PF00059">
    <property type="entry name" value="Lectin_C"/>
    <property type="match status" value="1"/>
</dbReference>
<dbReference type="Pfam" id="PF00084">
    <property type="entry name" value="Sushi"/>
    <property type="match status" value="1"/>
</dbReference>
<dbReference type="Pfam" id="PF07686">
    <property type="entry name" value="V-set"/>
    <property type="match status" value="1"/>
</dbReference>
<dbReference type="Pfam" id="PF00193">
    <property type="entry name" value="Xlink"/>
    <property type="match status" value="2"/>
</dbReference>
<dbReference type="PRINTS" id="PR01265">
    <property type="entry name" value="LINKMODULE"/>
</dbReference>
<dbReference type="SMART" id="SM00032">
    <property type="entry name" value="CCP"/>
    <property type="match status" value="1"/>
</dbReference>
<dbReference type="SMART" id="SM00034">
    <property type="entry name" value="CLECT"/>
    <property type="match status" value="1"/>
</dbReference>
<dbReference type="SMART" id="SM00181">
    <property type="entry name" value="EGF"/>
    <property type="match status" value="2"/>
</dbReference>
<dbReference type="SMART" id="SM00179">
    <property type="entry name" value="EGF_CA"/>
    <property type="match status" value="2"/>
</dbReference>
<dbReference type="SMART" id="SM00409">
    <property type="entry name" value="IG"/>
    <property type="match status" value="1"/>
</dbReference>
<dbReference type="SMART" id="SM00445">
    <property type="entry name" value="LINK"/>
    <property type="match status" value="2"/>
</dbReference>
<dbReference type="SUPFAM" id="SSF56436">
    <property type="entry name" value="C-type lectin-like"/>
    <property type="match status" value="3"/>
</dbReference>
<dbReference type="SUPFAM" id="SSF57535">
    <property type="entry name" value="Complement control module/SCR domain"/>
    <property type="match status" value="1"/>
</dbReference>
<dbReference type="SUPFAM" id="SSF57196">
    <property type="entry name" value="EGF/Laminin"/>
    <property type="match status" value="1"/>
</dbReference>
<dbReference type="SUPFAM" id="SSF48726">
    <property type="entry name" value="Immunoglobulin"/>
    <property type="match status" value="1"/>
</dbReference>
<dbReference type="PROSITE" id="PS00010">
    <property type="entry name" value="ASX_HYDROXYL"/>
    <property type="match status" value="1"/>
</dbReference>
<dbReference type="PROSITE" id="PS00615">
    <property type="entry name" value="C_TYPE_LECTIN_1"/>
    <property type="match status" value="1"/>
</dbReference>
<dbReference type="PROSITE" id="PS50041">
    <property type="entry name" value="C_TYPE_LECTIN_2"/>
    <property type="match status" value="1"/>
</dbReference>
<dbReference type="PROSITE" id="PS00022">
    <property type="entry name" value="EGF_1"/>
    <property type="match status" value="3"/>
</dbReference>
<dbReference type="PROSITE" id="PS01186">
    <property type="entry name" value="EGF_2"/>
    <property type="match status" value="1"/>
</dbReference>
<dbReference type="PROSITE" id="PS50026">
    <property type="entry name" value="EGF_3"/>
    <property type="match status" value="2"/>
</dbReference>
<dbReference type="PROSITE" id="PS01187">
    <property type="entry name" value="EGF_CA"/>
    <property type="match status" value="1"/>
</dbReference>
<dbReference type="PROSITE" id="PS50835">
    <property type="entry name" value="IG_LIKE"/>
    <property type="match status" value="1"/>
</dbReference>
<dbReference type="PROSITE" id="PS01241">
    <property type="entry name" value="LINK_1"/>
    <property type="match status" value="2"/>
</dbReference>
<dbReference type="PROSITE" id="PS50963">
    <property type="entry name" value="LINK_2"/>
    <property type="match status" value="2"/>
</dbReference>
<dbReference type="PROSITE" id="PS50923">
    <property type="entry name" value="SUSHI"/>
    <property type="match status" value="1"/>
</dbReference>
<accession>P55066</accession>
<accession>Q6P1E3</accession>
<accession>Q8C4F8</accession>
<protein>
    <recommendedName>
        <fullName>Neurocan core protein</fullName>
    </recommendedName>
    <alternativeName>
        <fullName>Chondroitin sulfate proteoglycan 3</fullName>
    </alternativeName>
</protein>
<name>NCAN_MOUSE</name>
<reference key="1">
    <citation type="journal article" date="1995" name="Genomics">
        <title>Structure and chromosomal localization of the mouse neurocan gene.</title>
        <authorList>
            <person name="Rauch U."/>
            <person name="Grimpe B."/>
            <person name="Kulbe G."/>
            <person name="Arnold-Ammer I."/>
            <person name="Beier D."/>
            <person name="Faessler R."/>
        </authorList>
    </citation>
    <scope>NUCLEOTIDE SEQUENCE [MRNA]</scope>
    <source>
        <strain>BALB/cJ</strain>
        <tissue>Brain</tissue>
    </source>
</reference>
<reference key="2">
    <citation type="journal article" date="2004" name="Genome Res.">
        <title>The status, quality, and expansion of the NIH full-length cDNA project: the Mammalian Gene Collection (MGC).</title>
        <authorList>
            <consortium name="The MGC Project Team"/>
        </authorList>
    </citation>
    <scope>NUCLEOTIDE SEQUENCE [LARGE SCALE MRNA]</scope>
    <source>
        <strain>C57BL/6J</strain>
        <tissue>Brain</tissue>
    </source>
</reference>
<reference key="3">
    <citation type="journal article" date="2005" name="Science">
        <title>The transcriptional landscape of the mammalian genome.</title>
        <authorList>
            <person name="Carninci P."/>
            <person name="Kasukawa T."/>
            <person name="Katayama S."/>
            <person name="Gough J."/>
            <person name="Frith M.C."/>
            <person name="Maeda N."/>
            <person name="Oyama R."/>
            <person name="Ravasi T."/>
            <person name="Lenhard B."/>
            <person name="Wells C."/>
            <person name="Kodzius R."/>
            <person name="Shimokawa K."/>
            <person name="Bajic V.B."/>
            <person name="Brenner S.E."/>
            <person name="Batalov S."/>
            <person name="Forrest A.R."/>
            <person name="Zavolan M."/>
            <person name="Davis M.J."/>
            <person name="Wilming L.G."/>
            <person name="Aidinis V."/>
            <person name="Allen J.E."/>
            <person name="Ambesi-Impiombato A."/>
            <person name="Apweiler R."/>
            <person name="Aturaliya R.N."/>
            <person name="Bailey T.L."/>
            <person name="Bansal M."/>
            <person name="Baxter L."/>
            <person name="Beisel K.W."/>
            <person name="Bersano T."/>
            <person name="Bono H."/>
            <person name="Chalk A.M."/>
            <person name="Chiu K.P."/>
            <person name="Choudhary V."/>
            <person name="Christoffels A."/>
            <person name="Clutterbuck D.R."/>
            <person name="Crowe M.L."/>
            <person name="Dalla E."/>
            <person name="Dalrymple B.P."/>
            <person name="de Bono B."/>
            <person name="Della Gatta G."/>
            <person name="di Bernardo D."/>
            <person name="Down T."/>
            <person name="Engstrom P."/>
            <person name="Fagiolini M."/>
            <person name="Faulkner G."/>
            <person name="Fletcher C.F."/>
            <person name="Fukushima T."/>
            <person name="Furuno M."/>
            <person name="Futaki S."/>
            <person name="Gariboldi M."/>
            <person name="Georgii-Hemming P."/>
            <person name="Gingeras T.R."/>
            <person name="Gojobori T."/>
            <person name="Green R.E."/>
            <person name="Gustincich S."/>
            <person name="Harbers M."/>
            <person name="Hayashi Y."/>
            <person name="Hensch T.K."/>
            <person name="Hirokawa N."/>
            <person name="Hill D."/>
            <person name="Huminiecki L."/>
            <person name="Iacono M."/>
            <person name="Ikeo K."/>
            <person name="Iwama A."/>
            <person name="Ishikawa T."/>
            <person name="Jakt M."/>
            <person name="Kanapin A."/>
            <person name="Katoh M."/>
            <person name="Kawasawa Y."/>
            <person name="Kelso J."/>
            <person name="Kitamura H."/>
            <person name="Kitano H."/>
            <person name="Kollias G."/>
            <person name="Krishnan S.P."/>
            <person name="Kruger A."/>
            <person name="Kummerfeld S.K."/>
            <person name="Kurochkin I.V."/>
            <person name="Lareau L.F."/>
            <person name="Lazarevic D."/>
            <person name="Lipovich L."/>
            <person name="Liu J."/>
            <person name="Liuni S."/>
            <person name="McWilliam S."/>
            <person name="Madan Babu M."/>
            <person name="Madera M."/>
            <person name="Marchionni L."/>
            <person name="Matsuda H."/>
            <person name="Matsuzawa S."/>
            <person name="Miki H."/>
            <person name="Mignone F."/>
            <person name="Miyake S."/>
            <person name="Morris K."/>
            <person name="Mottagui-Tabar S."/>
            <person name="Mulder N."/>
            <person name="Nakano N."/>
            <person name="Nakauchi H."/>
            <person name="Ng P."/>
            <person name="Nilsson R."/>
            <person name="Nishiguchi S."/>
            <person name="Nishikawa S."/>
            <person name="Nori F."/>
            <person name="Ohara O."/>
            <person name="Okazaki Y."/>
            <person name="Orlando V."/>
            <person name="Pang K.C."/>
            <person name="Pavan W.J."/>
            <person name="Pavesi G."/>
            <person name="Pesole G."/>
            <person name="Petrovsky N."/>
            <person name="Piazza S."/>
            <person name="Reed J."/>
            <person name="Reid J.F."/>
            <person name="Ring B.Z."/>
            <person name="Ringwald M."/>
            <person name="Rost B."/>
            <person name="Ruan Y."/>
            <person name="Salzberg S.L."/>
            <person name="Sandelin A."/>
            <person name="Schneider C."/>
            <person name="Schoenbach C."/>
            <person name="Sekiguchi K."/>
            <person name="Semple C.A."/>
            <person name="Seno S."/>
            <person name="Sessa L."/>
            <person name="Sheng Y."/>
            <person name="Shibata Y."/>
            <person name="Shimada H."/>
            <person name="Shimada K."/>
            <person name="Silva D."/>
            <person name="Sinclair B."/>
            <person name="Sperling S."/>
            <person name="Stupka E."/>
            <person name="Sugiura K."/>
            <person name="Sultana R."/>
            <person name="Takenaka Y."/>
            <person name="Taki K."/>
            <person name="Tammoja K."/>
            <person name="Tan S.L."/>
            <person name="Tang S."/>
            <person name="Taylor M.S."/>
            <person name="Tegner J."/>
            <person name="Teichmann S.A."/>
            <person name="Ueda H.R."/>
            <person name="van Nimwegen E."/>
            <person name="Verardo R."/>
            <person name="Wei C.L."/>
            <person name="Yagi K."/>
            <person name="Yamanishi H."/>
            <person name="Zabarovsky E."/>
            <person name="Zhu S."/>
            <person name="Zimmer A."/>
            <person name="Hide W."/>
            <person name="Bult C."/>
            <person name="Grimmond S.M."/>
            <person name="Teasdale R.D."/>
            <person name="Liu E.T."/>
            <person name="Brusic V."/>
            <person name="Quackenbush J."/>
            <person name="Wahlestedt C."/>
            <person name="Mattick J.S."/>
            <person name="Hume D.A."/>
            <person name="Kai C."/>
            <person name="Sasaki D."/>
            <person name="Tomaru Y."/>
            <person name="Fukuda S."/>
            <person name="Kanamori-Katayama M."/>
            <person name="Suzuki M."/>
            <person name="Aoki J."/>
            <person name="Arakawa T."/>
            <person name="Iida J."/>
            <person name="Imamura K."/>
            <person name="Itoh M."/>
            <person name="Kato T."/>
            <person name="Kawaji H."/>
            <person name="Kawagashira N."/>
            <person name="Kawashima T."/>
            <person name="Kojima M."/>
            <person name="Kondo S."/>
            <person name="Konno H."/>
            <person name="Nakano K."/>
            <person name="Ninomiya N."/>
            <person name="Nishio T."/>
            <person name="Okada M."/>
            <person name="Plessy C."/>
            <person name="Shibata K."/>
            <person name="Shiraki T."/>
            <person name="Suzuki S."/>
            <person name="Tagami M."/>
            <person name="Waki K."/>
            <person name="Watahiki A."/>
            <person name="Okamura-Oho Y."/>
            <person name="Suzuki H."/>
            <person name="Kawai J."/>
            <person name="Hayashizaki Y."/>
        </authorList>
    </citation>
    <scope>NUCLEOTIDE SEQUENCE [LARGE SCALE MRNA] OF 1052-1268</scope>
    <source>
        <strain>C57BL/6J</strain>
        <tissue>Cerebellum</tissue>
    </source>
</reference>
<reference key="4">
    <citation type="journal article" date="2010" name="Cell">
        <title>A tissue-specific atlas of mouse protein phosphorylation and expression.</title>
        <authorList>
            <person name="Huttlin E.L."/>
            <person name="Jedrychowski M.P."/>
            <person name="Elias J.E."/>
            <person name="Goswami T."/>
            <person name="Rad R."/>
            <person name="Beausoleil S.A."/>
            <person name="Villen J."/>
            <person name="Haas W."/>
            <person name="Sowa M.E."/>
            <person name="Gygi S.P."/>
        </authorList>
    </citation>
    <scope>IDENTIFICATION BY MASS SPECTROMETRY [LARGE SCALE ANALYSIS]</scope>
    <source>
        <tissue>Brain</tissue>
    </source>
</reference>
<evidence type="ECO:0000250" key="1"/>
<evidence type="ECO:0000250" key="2">
    <source>
        <dbReference type="UniProtKB" id="O14594"/>
    </source>
</evidence>
<evidence type="ECO:0000255" key="3"/>
<evidence type="ECO:0000255" key="4">
    <source>
        <dbReference type="PROSITE-ProRule" id="PRU00040"/>
    </source>
</evidence>
<evidence type="ECO:0000255" key="5">
    <source>
        <dbReference type="PROSITE-ProRule" id="PRU00076"/>
    </source>
</evidence>
<evidence type="ECO:0000255" key="6">
    <source>
        <dbReference type="PROSITE-ProRule" id="PRU00302"/>
    </source>
</evidence>
<evidence type="ECO:0000255" key="7">
    <source>
        <dbReference type="PROSITE-ProRule" id="PRU00323"/>
    </source>
</evidence>
<evidence type="ECO:0000256" key="8">
    <source>
        <dbReference type="SAM" id="MobiDB-lite"/>
    </source>
</evidence>
<evidence type="ECO:0000305" key="9"/>
<organism>
    <name type="scientific">Mus musculus</name>
    <name type="common">Mouse</name>
    <dbReference type="NCBI Taxonomy" id="10090"/>
    <lineage>
        <taxon>Eukaryota</taxon>
        <taxon>Metazoa</taxon>
        <taxon>Chordata</taxon>
        <taxon>Craniata</taxon>
        <taxon>Vertebrata</taxon>
        <taxon>Euteleostomi</taxon>
        <taxon>Mammalia</taxon>
        <taxon>Eutheria</taxon>
        <taxon>Euarchontoglires</taxon>
        <taxon>Glires</taxon>
        <taxon>Rodentia</taxon>
        <taxon>Myomorpha</taxon>
        <taxon>Muroidea</taxon>
        <taxon>Muridae</taxon>
        <taxon>Murinae</taxon>
        <taxon>Mus</taxon>
        <taxon>Mus</taxon>
    </lineage>
</organism>
<comment type="function">
    <text>May modulate neuronal adhesion and neurite growth during development by binding to neural cell adhesion molecules (NG-CAM and N-CAM). Chondroitin sulfate proteoglycan; binds to hyaluronic acid.</text>
</comment>
<comment type="subcellular location">
    <subcellularLocation>
        <location evidence="2">Secreted</location>
    </subcellularLocation>
</comment>
<comment type="tissue specificity">
    <text>Brain.</text>
</comment>
<comment type="PTM">
    <text evidence="2">O-glycosylated; contains chondroitin sulfate.</text>
</comment>
<comment type="similarity">
    <text evidence="9">Belongs to the aggrecan/versican proteoglycan family.</text>
</comment>
<comment type="online information" name="Functional Glycomics Gateway - Glycan Binding">
    <link uri="http://www.functionalglycomics.org/glycomics/GBPServlet?&amp;operationType=view&amp;cbpId=cbp_mou_Ctlect_156"/>
    <text>Neurocan</text>
</comment>
<proteinExistence type="evidence at protein level"/>
<sequence length="1268" mass="137200">MGAGSVWASGLLLLWLLLLVAGDQDTQDTTATEKGLRMLKSGSGPVRAALAELVALPCFFTLQPRLSSLRDIPRIKWTKVQTASGQRQDLPILVAKDNVVRVAKGWQGRVSLPAYPRHRANATLLLGPLRASDSGLYRCQVVKGIEDEQDLVTLEVTGVVFHYRAARDRYALTFAEAQEACRLSSATIAAPRHLQAAFEDGFDNCDAGWLSDRTVRYPITQSRPGCYGDRSSLPGVRSYGRRDPQELYDVYCFARELGGEVFYVGPARRLTLAGARAQCQRQGAALASVGQLHLAWHEGLDQCDPGWLADGSVRYPIQTPRRRCGGPAPGVRTVYRFANRTGFPAPGARFDAYCFRAHHHTAQHGDSEIPSSGDEGEIVSAEGPPGRELKPSLGEQEVIAPDFQEPLMSSGEGEPPDLTWTQAPEETLGSTPGGPTLASWPSSEKWLFTGAPSSMGVSSPSDMGVDMEATTPLGTQVAPTPTMRRGRFKGLNGRHFQQQGPEDQLPEVAEPSAQPPTLGATANHMRPSAATEASESDQSHSPWAILTNEVDEPGAGSLGSRSLPESLMWSPSLISPSVPSTESTPSPKPGAAEAPSVKSAIPHLPRLPSEPPAPSPGPSEALSAVSLQASSADGSPDFPIVAMLRAPKLWLLPRSTLVPNMTPVPLSPASPLPSWVPEEQAVRPVSLGAEDLETPFQTTIAAPVEASHRSPDADSIEIEGTSSMRATKHPISGPWASLDSSNVTMNPVPSDAGILGTESGVLDLPGSPTSGGQATVEKVLATWLPLPGQGLDPGSQSTPMEAHGVAVSMEPTVALEGGATEGPMEATREVVPSTADATWESESRSAISSTHIAVTMARAQGMPTLTSTSSEGHPEPKGQMVAQESLEPLNTLPSHPWSSLVVPMDEVASVSSGEPTGLWDIPSTLIPVSLGLDESVLNVVAESPSVEGFWEEVASGQEDPTDPCENNPCLHGGTCHTNGTVYGCSCDQGYAGENCEIDIDDCLCSPCENGGTCIDEVNGFICLCLPSYGGSLCEKDTEGCDRGWHKFQGHCYRYFAHRRAWEDAERDCRRRAGHLTSVHSPEEHKFINSFGHENSWIGLNDRTVERDFQWTDNTGLQYENWREKQPDNFFAGGEDCVVMVAHESGRWNDVPCNYNLPYVCKKGTVLCGPPPAVENASLVGVRKIKYNVHATVRYQCDEGFSQHRVATIRCRNNGKWDRPQIMCIKPRRSHRMRRHHHHPHRHHKPRKEHRKHKRHPAEDWEKDEGDFC</sequence>
<feature type="signal peptide" evidence="3">
    <location>
        <begin position="1"/>
        <end position="22"/>
    </location>
</feature>
<feature type="chain" id="PRO_0000017517" description="Neurocan core protein">
    <location>
        <begin position="23"/>
        <end position="1268"/>
    </location>
</feature>
<feature type="domain" description="Ig-like V-type">
    <location>
        <begin position="37"/>
        <end position="157"/>
    </location>
</feature>
<feature type="domain" description="Link 1" evidence="7">
    <location>
        <begin position="159"/>
        <end position="254"/>
    </location>
</feature>
<feature type="domain" description="Link 2" evidence="7">
    <location>
        <begin position="258"/>
        <end position="356"/>
    </location>
</feature>
<feature type="domain" description="EGF-like 1" evidence="5">
    <location>
        <begin position="960"/>
        <end position="996"/>
    </location>
</feature>
<feature type="domain" description="EGF-like 2; calcium-binding" evidence="5">
    <location>
        <begin position="998"/>
        <end position="1034"/>
    </location>
</feature>
<feature type="domain" description="C-type lectin" evidence="4">
    <location>
        <begin position="1036"/>
        <end position="1165"/>
    </location>
</feature>
<feature type="domain" description="Sushi" evidence="6">
    <location>
        <begin position="1165"/>
        <end position="1225"/>
    </location>
</feature>
<feature type="region of interest" description="Disordered" evidence="8">
    <location>
        <begin position="363"/>
        <end position="391"/>
    </location>
</feature>
<feature type="region of interest" description="Disordered" evidence="8">
    <location>
        <begin position="406"/>
        <end position="442"/>
    </location>
</feature>
<feature type="region of interest" description="Disordered" evidence="8">
    <location>
        <begin position="472"/>
        <end position="540"/>
    </location>
</feature>
<feature type="region of interest" description="Disordered" evidence="8">
    <location>
        <begin position="574"/>
        <end position="630"/>
    </location>
</feature>
<feature type="region of interest" description="Disordered" evidence="8">
    <location>
        <begin position="1228"/>
        <end position="1268"/>
    </location>
</feature>
<feature type="compositionally biased region" description="Polar residues" evidence="8">
    <location>
        <begin position="419"/>
        <end position="430"/>
    </location>
</feature>
<feature type="compositionally biased region" description="Low complexity" evidence="8">
    <location>
        <begin position="575"/>
        <end position="585"/>
    </location>
</feature>
<feature type="compositionally biased region" description="Pro residues" evidence="8">
    <location>
        <begin position="608"/>
        <end position="617"/>
    </location>
</feature>
<feature type="compositionally biased region" description="Low complexity" evidence="8">
    <location>
        <begin position="618"/>
        <end position="630"/>
    </location>
</feature>
<feature type="compositionally biased region" description="Basic residues" evidence="8">
    <location>
        <begin position="1228"/>
        <end position="1255"/>
    </location>
</feature>
<feature type="glycosylation site" description="N-linked (GlcNAc...) asparagine" evidence="3">
    <location>
        <position position="121"/>
    </location>
</feature>
<feature type="glycosylation site" description="N-linked (GlcNAc...) asparagine" evidence="3">
    <location>
        <position position="339"/>
    </location>
</feature>
<feature type="glycosylation site" description="O-linked (Xyl...) (chondroitin sulfate) serine" evidence="2">
    <location>
        <position position="380"/>
    </location>
</feature>
<feature type="glycosylation site" description="O-linked (Xyl...) (chondroitin sulfate) serine" evidence="2">
    <location>
        <position position="410"/>
    </location>
</feature>
<feature type="glycosylation site" description="N-linked (GlcNAc...) asparagine" evidence="3">
    <location>
        <position position="742"/>
    </location>
</feature>
<feature type="glycosylation site" description="N-linked (GlcNAc...) asparagine" evidence="3">
    <location>
        <position position="978"/>
    </location>
</feature>
<feature type="glycosylation site" description="N-linked (GlcNAc...) asparagine" evidence="3">
    <location>
        <position position="1175"/>
    </location>
</feature>
<feature type="disulfide bond" evidence="1">
    <location>
        <begin position="58"/>
        <end position="139"/>
    </location>
</feature>
<feature type="disulfide bond" evidence="1">
    <location>
        <begin position="181"/>
        <end position="252"/>
    </location>
</feature>
<feature type="disulfide bond" evidence="1">
    <location>
        <begin position="205"/>
        <end position="226"/>
    </location>
</feature>
<feature type="disulfide bond" evidence="1">
    <location>
        <begin position="279"/>
        <end position="354"/>
    </location>
</feature>
<feature type="disulfide bond" evidence="1">
    <location>
        <begin position="303"/>
        <end position="324"/>
    </location>
</feature>
<feature type="disulfide bond" evidence="1">
    <location>
        <begin position="964"/>
        <end position="975"/>
    </location>
</feature>
<feature type="disulfide bond" evidence="1">
    <location>
        <begin position="969"/>
        <end position="984"/>
    </location>
</feature>
<feature type="disulfide bond" evidence="1">
    <location>
        <begin position="986"/>
        <end position="995"/>
    </location>
</feature>
<feature type="disulfide bond" evidence="1">
    <location>
        <begin position="1002"/>
        <end position="1013"/>
    </location>
</feature>
<feature type="disulfide bond" evidence="1">
    <location>
        <begin position="1007"/>
        <end position="1022"/>
    </location>
</feature>
<feature type="disulfide bond" evidence="1">
    <location>
        <begin position="1024"/>
        <end position="1033"/>
    </location>
</feature>
<feature type="disulfide bond" evidence="1">
    <location>
        <begin position="1040"/>
        <end position="1051"/>
    </location>
</feature>
<feature type="disulfide bond" evidence="1">
    <location>
        <begin position="1068"/>
        <end position="1160"/>
    </location>
</feature>
<feature type="disulfide bond" evidence="1">
    <location>
        <begin position="1136"/>
        <end position="1152"/>
    </location>
</feature>
<feature type="disulfide bond" evidence="1">
    <location>
        <begin position="1167"/>
        <end position="1210"/>
    </location>
</feature>
<feature type="disulfide bond" evidence="1">
    <location>
        <begin position="1196"/>
        <end position="1223"/>
    </location>
</feature>
<feature type="sequence conflict" description="In Ref. 2; AAH65118." evidence="9" ref="2">
    <original>E</original>
    <variation>D</variation>
    <location>
        <position position="582"/>
    </location>
</feature>
<feature type="sequence conflict" description="In Ref. 2; AAH65118." evidence="9" ref="2">
    <original>P</original>
    <variation>A</variation>
    <location>
        <position position="587"/>
    </location>
</feature>
<feature type="sequence conflict" description="In Ref. 2; AAH65118." evidence="9" ref="2">
    <original>V</original>
    <variation>D</variation>
    <location>
        <position position="936"/>
    </location>
</feature>
<feature type="sequence conflict" description="In Ref. 2; AAH65118." evidence="9" ref="2">
    <original>E</original>
    <variation>K</variation>
    <location>
        <position position="947"/>
    </location>
</feature>
<keyword id="KW-0106">Calcium</keyword>
<keyword id="KW-0130">Cell adhesion</keyword>
<keyword id="KW-1015">Disulfide bond</keyword>
<keyword id="KW-0245">EGF-like domain</keyword>
<keyword id="KW-0325">Glycoprotein</keyword>
<keyword id="KW-0373">Hyaluronic acid</keyword>
<keyword id="KW-0393">Immunoglobulin domain</keyword>
<keyword id="KW-0430">Lectin</keyword>
<keyword id="KW-0654">Proteoglycan</keyword>
<keyword id="KW-1185">Reference proteome</keyword>
<keyword id="KW-0677">Repeat</keyword>
<keyword id="KW-0964">Secreted</keyword>
<keyword id="KW-0732">Signal</keyword>
<keyword id="KW-0768">Sushi</keyword>
<gene>
    <name type="primary">Ncan</name>
    <name type="synonym">Cspg3</name>
</gene>